<protein>
    <recommendedName>
        <fullName evidence="4">VQ motif-containing protein 20</fullName>
        <shortName evidence="4">AtVQ20</shortName>
    </recommendedName>
</protein>
<accession>Q9LS54</accession>
<feature type="chain" id="PRO_0000432317" description="VQ motif-containing protein 20">
    <location>
        <begin position="1"/>
        <end position="285"/>
    </location>
</feature>
<feature type="region of interest" description="Disordered" evidence="2">
    <location>
        <begin position="1"/>
        <end position="68"/>
    </location>
</feature>
<feature type="region of interest" description="Disordered" evidence="2">
    <location>
        <begin position="195"/>
        <end position="218"/>
    </location>
</feature>
<feature type="short sequence motif" description="VQ" evidence="5">
    <location>
        <begin position="91"/>
        <end position="100"/>
    </location>
</feature>
<feature type="compositionally biased region" description="Basic and acidic residues" evidence="2">
    <location>
        <begin position="1"/>
        <end position="10"/>
    </location>
</feature>
<feature type="compositionally biased region" description="Basic residues" evidence="2">
    <location>
        <begin position="11"/>
        <end position="23"/>
    </location>
</feature>
<feature type="compositionally biased region" description="Pro residues" evidence="2">
    <location>
        <begin position="201"/>
        <end position="216"/>
    </location>
</feature>
<organism>
    <name type="scientific">Arabidopsis thaliana</name>
    <name type="common">Mouse-ear cress</name>
    <dbReference type="NCBI Taxonomy" id="3702"/>
    <lineage>
        <taxon>Eukaryota</taxon>
        <taxon>Viridiplantae</taxon>
        <taxon>Streptophyta</taxon>
        <taxon>Embryophyta</taxon>
        <taxon>Tracheophyta</taxon>
        <taxon>Spermatophyta</taxon>
        <taxon>Magnoliopsida</taxon>
        <taxon>eudicotyledons</taxon>
        <taxon>Gunneridae</taxon>
        <taxon>Pentapetalae</taxon>
        <taxon>rosids</taxon>
        <taxon>malvids</taxon>
        <taxon>Brassicales</taxon>
        <taxon>Brassicaceae</taxon>
        <taxon>Camelineae</taxon>
        <taxon>Arabidopsis</taxon>
    </lineage>
</organism>
<reference key="1">
    <citation type="journal article" date="2000" name="DNA Res.">
        <title>Structural analysis of Arabidopsis thaliana chromosome 3. I. Sequence features of the regions of 4,504,864 bp covered by sixty P1 and TAC clones.</title>
        <authorList>
            <person name="Sato S."/>
            <person name="Nakamura Y."/>
            <person name="Kaneko T."/>
            <person name="Katoh T."/>
            <person name="Asamizu E."/>
            <person name="Tabata S."/>
        </authorList>
    </citation>
    <scope>NUCLEOTIDE SEQUENCE [LARGE SCALE GENOMIC DNA]</scope>
    <source>
        <strain>cv. Columbia</strain>
    </source>
</reference>
<reference key="2">
    <citation type="journal article" date="2017" name="Plant J.">
        <title>Araport11: a complete reannotation of the Arabidopsis thaliana reference genome.</title>
        <authorList>
            <person name="Cheng C.Y."/>
            <person name="Krishnakumar V."/>
            <person name="Chan A.P."/>
            <person name="Thibaud-Nissen F."/>
            <person name="Schobel S."/>
            <person name="Town C.D."/>
        </authorList>
    </citation>
    <scope>GENOME REANNOTATION</scope>
    <source>
        <strain>cv. Columbia</strain>
    </source>
</reference>
<reference key="3">
    <citation type="submission" date="2004-03" db="EMBL/GenBank/DDBJ databases">
        <title>Arabidopsis ORF clones.</title>
        <authorList>
            <person name="Cheuk R.F."/>
            <person name="Chen H."/>
            <person name="Kim C.J."/>
            <person name="Shinn P."/>
            <person name="Carninci P."/>
            <person name="Hayashizaki Y."/>
            <person name="Ishida J."/>
            <person name="Kamiya A."/>
            <person name="Kawai J."/>
            <person name="Narusaka M."/>
            <person name="Sakurai T."/>
            <person name="Satou M."/>
            <person name="Seki M."/>
            <person name="Shinozaki K."/>
            <person name="Ecker J.R."/>
        </authorList>
    </citation>
    <scope>NUCLEOTIDE SEQUENCE [LARGE SCALE MRNA]</scope>
    <source>
        <strain>cv. Columbia</strain>
    </source>
</reference>
<reference key="4">
    <citation type="journal article" date="2012" name="Plant Physiol.">
        <title>Structural and functional analysis of VQ motif-containing proteins in Arabidopsis as interacting proteins of WRKY transcription factors.</title>
        <authorList>
            <person name="Cheng Y."/>
            <person name="Zhou Y."/>
            <person name="Yang Y."/>
            <person name="Chi Y.J."/>
            <person name="Zhou J."/>
            <person name="Chen J.Y."/>
            <person name="Wang F."/>
            <person name="Fan B."/>
            <person name="Shi K."/>
            <person name="Zhou Y.H."/>
            <person name="Yu J.Q."/>
            <person name="Chen Z."/>
        </authorList>
    </citation>
    <scope>FUNCTION</scope>
    <scope>GENE FAMILY</scope>
    <scope>NOMENCLATURE</scope>
</reference>
<name>VQ20_ARATH</name>
<sequence>MSSTYKDNHPYHHHPHHHHHHPKREPNENNSGILYTPSPSPSPPTLKVNKDSHVIKKPPSPSSFSSAAKPRHPVIIYTHTPRIIHTNPKDFMALVQKLTGMTHSDEDLGGGNAMTDPGVVKSINRTVSEPTVDRKNNRNRCGGGNNYLRNYSGAGNGKGIFFNNTMISEDSESSSVITTEENIGEHGQVNSSLPYSAVAIPPQPPPHPPPPPPPPSMYDAAGINYGAYLPTFPIFPPANPADNFLCGNQPFANFDDPLFFAPNMRSSFSSSSSSGFDGLTEFRDF</sequence>
<comment type="function">
    <text evidence="6">May function as negative regulator of plant defense.</text>
</comment>
<comment type="subcellular location">
    <subcellularLocation>
        <location evidence="1">Nucleus</location>
    </subcellularLocation>
</comment>
<comment type="miscellaneous">
    <text evidence="3">Plants over-expressing VQ20 display enhanced disease symptoms after infection of either the necrotrophic fungal pathogen B.cinerea or the bacterial pathogen P.syringae.</text>
</comment>
<keyword id="KW-0539">Nucleus</keyword>
<keyword id="KW-0611">Plant defense</keyword>
<keyword id="KW-1185">Reference proteome</keyword>
<gene>
    <name evidence="4" type="primary">VQ20</name>
    <name evidence="7" type="ordered locus">At3g18360</name>
    <name type="ORF">MYF24.8</name>
</gene>
<dbReference type="EMBL" id="AB026658">
    <property type="protein sequence ID" value="BAB01102.1"/>
    <property type="molecule type" value="Genomic_DNA"/>
</dbReference>
<dbReference type="EMBL" id="CP002686">
    <property type="protein sequence ID" value="AEE76086.1"/>
    <property type="molecule type" value="Genomic_DNA"/>
</dbReference>
<dbReference type="EMBL" id="BT012192">
    <property type="protein sequence ID" value="AAS76679.1"/>
    <property type="molecule type" value="mRNA"/>
</dbReference>
<dbReference type="RefSeq" id="NP_188465.1">
    <property type="nucleotide sequence ID" value="NM_112721.2"/>
</dbReference>
<dbReference type="IntAct" id="Q9LS54">
    <property type="interactions" value="2"/>
</dbReference>
<dbReference type="STRING" id="3702.Q9LS54"/>
<dbReference type="PaxDb" id="3702-AT3G18360.1"/>
<dbReference type="EnsemblPlants" id="AT3G18360.1">
    <property type="protein sequence ID" value="AT3G18360.1"/>
    <property type="gene ID" value="AT3G18360"/>
</dbReference>
<dbReference type="GeneID" id="821365"/>
<dbReference type="Gramene" id="AT3G18360.1">
    <property type="protein sequence ID" value="AT3G18360.1"/>
    <property type="gene ID" value="AT3G18360"/>
</dbReference>
<dbReference type="KEGG" id="ath:AT3G18360"/>
<dbReference type="Araport" id="AT3G18360"/>
<dbReference type="TAIR" id="AT3G18360">
    <property type="gene designation" value="VQ20"/>
</dbReference>
<dbReference type="eggNOG" id="ENOG502S37N">
    <property type="taxonomic scope" value="Eukaryota"/>
</dbReference>
<dbReference type="HOGENOM" id="CLU_102374_0_0_1"/>
<dbReference type="InParanoid" id="Q9LS54"/>
<dbReference type="OMA" id="QPFANFD"/>
<dbReference type="PhylomeDB" id="Q9LS54"/>
<dbReference type="PRO" id="PR:Q9LS54"/>
<dbReference type="Proteomes" id="UP000006548">
    <property type="component" value="Chromosome 3"/>
</dbReference>
<dbReference type="ExpressionAtlas" id="Q9LS54">
    <property type="expression patterns" value="baseline and differential"/>
</dbReference>
<dbReference type="GO" id="GO:0005634">
    <property type="term" value="C:nucleus"/>
    <property type="evidence" value="ECO:0007669"/>
    <property type="project" value="UniProtKB-SubCell"/>
</dbReference>
<dbReference type="GO" id="GO:0006952">
    <property type="term" value="P:defense response"/>
    <property type="evidence" value="ECO:0007669"/>
    <property type="project" value="UniProtKB-KW"/>
</dbReference>
<dbReference type="GO" id="GO:0080092">
    <property type="term" value="P:regulation of pollen tube growth"/>
    <property type="evidence" value="ECO:0000316"/>
    <property type="project" value="TAIR"/>
</dbReference>
<dbReference type="InterPro" id="IPR008889">
    <property type="entry name" value="VQ"/>
</dbReference>
<dbReference type="InterPro" id="IPR039607">
    <property type="entry name" value="VQ_8/17/18/20/21/25"/>
</dbReference>
<dbReference type="PANTHER" id="PTHR33143">
    <property type="entry name" value="F16F4.1 PROTEIN-RELATED"/>
    <property type="match status" value="1"/>
</dbReference>
<dbReference type="PANTHER" id="PTHR33143:SF66">
    <property type="entry name" value="VQ MOTIF-CONTAINING PROTEIN 20"/>
    <property type="match status" value="1"/>
</dbReference>
<dbReference type="Pfam" id="PF05678">
    <property type="entry name" value="VQ"/>
    <property type="match status" value="1"/>
</dbReference>
<proteinExistence type="evidence at transcript level"/>
<evidence type="ECO:0000250" key="1">
    <source>
        <dbReference type="UniProtKB" id="Q9M9F0"/>
    </source>
</evidence>
<evidence type="ECO:0000256" key="2">
    <source>
        <dbReference type="SAM" id="MobiDB-lite"/>
    </source>
</evidence>
<evidence type="ECO:0000269" key="3">
    <source>
    </source>
</evidence>
<evidence type="ECO:0000303" key="4">
    <source>
    </source>
</evidence>
<evidence type="ECO:0000305" key="5"/>
<evidence type="ECO:0000305" key="6">
    <source>
    </source>
</evidence>
<evidence type="ECO:0000312" key="7">
    <source>
        <dbReference type="Araport" id="AT3G18360"/>
    </source>
</evidence>